<feature type="chain" id="PRO_1000197954" description="D-aminoacyl-tRNA deacylase">
    <location>
        <begin position="1"/>
        <end position="435"/>
    </location>
</feature>
<sequence length="435" mass="46677">MKITLVNSRLDPAGVTIREQIQVLLADPEYQREGIDWEFLEIDGRLIHQERIDTGLNSDLLIFLSRHTSRRPVPVLTVHPTGNPGEALLGGEAGSFAPAAPGWMQAVLQNLVRLVPDGYQASYEVTHHGPTTLSTPSFFVEIGSTDHEWSDPVAGAAVAEAVLTAAPVDPISLIGFGGTHYAPRETAVALETRGAFGHILHSREIGGLTGSLLAKIATAAEAEAVYIDRKAIDRPALDHLYALLEETDLPVLGEKELHQIGSLSWQEYRSLRQIAGDAAPGAHLVIGTLPGGGTPVTATVPADLLAQAISADQGRVMTAIGRMPVVGLTGRGGLLLPIIITYERYRSQIIHDLITLCVKTIREEQHAVIDGDRLIIKKERFDPGLAASLGVPPGALFGMLKGGQAVRVGDQVIKPEMVRSCTVTAIHLRGLERYT</sequence>
<accession>B8GIX8</accession>
<dbReference type="EC" id="3.1.1.96" evidence="1"/>
<dbReference type="EMBL" id="CP001338">
    <property type="protein sequence ID" value="ACL15551.1"/>
    <property type="molecule type" value="Genomic_DNA"/>
</dbReference>
<dbReference type="RefSeq" id="WP_012616870.1">
    <property type="nucleotide sequence ID" value="NC_011832.1"/>
</dbReference>
<dbReference type="SMR" id="B8GIX8"/>
<dbReference type="STRING" id="521011.Mpal_0158"/>
<dbReference type="GeneID" id="7270929"/>
<dbReference type="KEGG" id="mpl:Mpal_0158"/>
<dbReference type="eggNOG" id="arCOG00501">
    <property type="taxonomic scope" value="Archaea"/>
</dbReference>
<dbReference type="eggNOG" id="arCOG01616">
    <property type="taxonomic scope" value="Archaea"/>
</dbReference>
<dbReference type="HOGENOM" id="CLU_610619_0_0_2"/>
<dbReference type="OrthoDB" id="9863at2157"/>
<dbReference type="Proteomes" id="UP000002457">
    <property type="component" value="Chromosome"/>
</dbReference>
<dbReference type="GO" id="GO:0051499">
    <property type="term" value="F:D-aminoacyl-tRNA deacylase activity"/>
    <property type="evidence" value="ECO:0007669"/>
    <property type="project" value="UniProtKB-UniRule"/>
</dbReference>
<dbReference type="GO" id="GO:0008270">
    <property type="term" value="F:zinc ion binding"/>
    <property type="evidence" value="ECO:0007669"/>
    <property type="project" value="UniProtKB-UniRule"/>
</dbReference>
<dbReference type="GO" id="GO:0019478">
    <property type="term" value="P:D-amino acid catabolic process"/>
    <property type="evidence" value="ECO:0007669"/>
    <property type="project" value="UniProtKB-UniRule"/>
</dbReference>
<dbReference type="Gene3D" id="3.40.50.10700">
    <property type="entry name" value="AF0625-like"/>
    <property type="match status" value="1"/>
</dbReference>
<dbReference type="Gene3D" id="3.40.630.50">
    <property type="entry name" value="AF0625-like"/>
    <property type="match status" value="1"/>
</dbReference>
<dbReference type="HAMAP" id="MF_00562">
    <property type="entry name" value="Deacylase_DtdA"/>
    <property type="match status" value="1"/>
</dbReference>
<dbReference type="InterPro" id="IPR018033">
    <property type="entry name" value="Deacylase_DtdA_archaea"/>
</dbReference>
<dbReference type="InterPro" id="IPR007508">
    <property type="entry name" value="DtdA"/>
</dbReference>
<dbReference type="NCBIfam" id="NF011436">
    <property type="entry name" value="PRK14866.1-3"/>
    <property type="match status" value="1"/>
</dbReference>
<dbReference type="PANTHER" id="PTHR34667">
    <property type="entry name" value="D-AMINOACYL-TRNA DEACYLASE"/>
    <property type="match status" value="1"/>
</dbReference>
<dbReference type="PANTHER" id="PTHR34667:SF1">
    <property type="entry name" value="D-AMINOACYL-TRNA DEACYLASE"/>
    <property type="match status" value="1"/>
</dbReference>
<dbReference type="Pfam" id="PF04414">
    <property type="entry name" value="tRNA_deacylase"/>
    <property type="match status" value="1"/>
</dbReference>
<dbReference type="SUPFAM" id="SSF142535">
    <property type="entry name" value="AF0625-like"/>
    <property type="match status" value="1"/>
</dbReference>
<gene>
    <name evidence="1" type="primary">dtdA</name>
    <name type="ordered locus">Mpal_0158</name>
</gene>
<name>DTDA_METPE</name>
<evidence type="ECO:0000255" key="1">
    <source>
        <dbReference type="HAMAP-Rule" id="MF_00562"/>
    </source>
</evidence>
<protein>
    <recommendedName>
        <fullName evidence="1">D-aminoacyl-tRNA deacylase</fullName>
        <ecNumber evidence="1">3.1.1.96</ecNumber>
    </recommendedName>
    <alternativeName>
        <fullName>D-tyrosyl-tRNA(Tyr) deacylase</fullName>
    </alternativeName>
</protein>
<keyword id="KW-0378">Hydrolase</keyword>
<keyword id="KW-0479">Metal-binding</keyword>
<keyword id="KW-1185">Reference proteome</keyword>
<keyword id="KW-0862">Zinc</keyword>
<reference key="1">
    <citation type="journal article" date="2015" name="Genome Announc.">
        <title>Complete Genome Sequence of Methanosphaerula palustris E1-9CT, a Hydrogenotrophic Methanogen Isolated from a Minerotrophic Fen Peatland.</title>
        <authorList>
            <person name="Cadillo-Quiroz H."/>
            <person name="Browne P."/>
            <person name="Kyrpides N."/>
            <person name="Woyke T."/>
            <person name="Goodwin L."/>
            <person name="Detter C."/>
            <person name="Yavitt J.B."/>
            <person name="Zinder S.H."/>
        </authorList>
    </citation>
    <scope>NUCLEOTIDE SEQUENCE [LARGE SCALE GENOMIC DNA]</scope>
    <source>
        <strain>ATCC BAA-1556 / DSM 19958 / E1-9c</strain>
    </source>
</reference>
<organism>
    <name type="scientific">Methanosphaerula palustris (strain ATCC BAA-1556 / DSM 19958 / E1-9c)</name>
    <dbReference type="NCBI Taxonomy" id="521011"/>
    <lineage>
        <taxon>Archaea</taxon>
        <taxon>Methanobacteriati</taxon>
        <taxon>Methanobacteriota</taxon>
        <taxon>Stenosarchaea group</taxon>
        <taxon>Methanomicrobia</taxon>
        <taxon>Methanomicrobiales</taxon>
        <taxon>Methanoregulaceae</taxon>
        <taxon>Methanosphaerula</taxon>
    </lineage>
</organism>
<proteinExistence type="inferred from homology"/>
<comment type="function">
    <text evidence="1">D-aminoacyl-tRNA deacylase with broad substrate specificity. By recycling D-aminoacyl-tRNA to D-amino acids and free tRNA molecules, this enzyme counteracts the toxicity associated with the formation of D-aminoacyl-tRNA entities in vivo.</text>
</comment>
<comment type="catalytic activity">
    <reaction evidence="1">
        <text>a D-aminoacyl-tRNA + H2O = a tRNA + a D-alpha-amino acid + H(+)</text>
        <dbReference type="Rhea" id="RHEA:13953"/>
        <dbReference type="Rhea" id="RHEA-COMP:10123"/>
        <dbReference type="Rhea" id="RHEA-COMP:10124"/>
        <dbReference type="ChEBI" id="CHEBI:15377"/>
        <dbReference type="ChEBI" id="CHEBI:15378"/>
        <dbReference type="ChEBI" id="CHEBI:59871"/>
        <dbReference type="ChEBI" id="CHEBI:78442"/>
        <dbReference type="ChEBI" id="CHEBI:79333"/>
        <dbReference type="EC" id="3.1.1.96"/>
    </reaction>
</comment>
<comment type="catalytic activity">
    <reaction evidence="1">
        <text>glycyl-tRNA(Ala) + H2O = tRNA(Ala) + glycine + H(+)</text>
        <dbReference type="Rhea" id="RHEA:53744"/>
        <dbReference type="Rhea" id="RHEA-COMP:9657"/>
        <dbReference type="Rhea" id="RHEA-COMP:13640"/>
        <dbReference type="ChEBI" id="CHEBI:15377"/>
        <dbReference type="ChEBI" id="CHEBI:15378"/>
        <dbReference type="ChEBI" id="CHEBI:57305"/>
        <dbReference type="ChEBI" id="CHEBI:78442"/>
        <dbReference type="ChEBI" id="CHEBI:78522"/>
        <dbReference type="EC" id="3.1.1.96"/>
    </reaction>
</comment>
<comment type="cofactor">
    <cofactor evidence="1">
        <name>Zn(2+)</name>
        <dbReference type="ChEBI" id="CHEBI:29105"/>
    </cofactor>
    <text evidence="1">Binds 2 Zn(2+) ions per subunit.</text>
</comment>
<comment type="subunit">
    <text evidence="1">Monomer.</text>
</comment>
<comment type="similarity">
    <text evidence="1">Belongs to the DtdA deacylase family.</text>
</comment>